<dbReference type="EMBL" id="AE014133">
    <property type="protein sequence ID" value="AAN58983.1"/>
    <property type="molecule type" value="Genomic_DNA"/>
</dbReference>
<dbReference type="RefSeq" id="NP_721677.1">
    <property type="nucleotide sequence ID" value="NC_004350.2"/>
</dbReference>
<dbReference type="SMR" id="Q8DTM7"/>
<dbReference type="STRING" id="210007.SMU_1306c"/>
<dbReference type="KEGG" id="smu:SMU_1306c"/>
<dbReference type="PATRIC" id="fig|210007.7.peg.1171"/>
<dbReference type="eggNOG" id="COG1660">
    <property type="taxonomic scope" value="Bacteria"/>
</dbReference>
<dbReference type="HOGENOM" id="CLU_059558_0_0_9"/>
<dbReference type="OrthoDB" id="9784461at2"/>
<dbReference type="PhylomeDB" id="Q8DTM7"/>
<dbReference type="Proteomes" id="UP000002512">
    <property type="component" value="Chromosome"/>
</dbReference>
<dbReference type="GO" id="GO:0005524">
    <property type="term" value="F:ATP binding"/>
    <property type="evidence" value="ECO:0007669"/>
    <property type="project" value="UniProtKB-UniRule"/>
</dbReference>
<dbReference type="GO" id="GO:0005525">
    <property type="term" value="F:GTP binding"/>
    <property type="evidence" value="ECO:0007669"/>
    <property type="project" value="UniProtKB-UniRule"/>
</dbReference>
<dbReference type="HAMAP" id="MF_00636">
    <property type="entry name" value="RapZ_like"/>
    <property type="match status" value="1"/>
</dbReference>
<dbReference type="InterPro" id="IPR027417">
    <property type="entry name" value="P-loop_NTPase"/>
</dbReference>
<dbReference type="InterPro" id="IPR005337">
    <property type="entry name" value="RapZ-like"/>
</dbReference>
<dbReference type="InterPro" id="IPR053930">
    <property type="entry name" value="RapZ-like_N"/>
</dbReference>
<dbReference type="InterPro" id="IPR053931">
    <property type="entry name" value="RapZ_C"/>
</dbReference>
<dbReference type="NCBIfam" id="NF003828">
    <property type="entry name" value="PRK05416.1"/>
    <property type="match status" value="1"/>
</dbReference>
<dbReference type="PANTHER" id="PTHR30448">
    <property type="entry name" value="RNASE ADAPTER PROTEIN RAPZ"/>
    <property type="match status" value="1"/>
</dbReference>
<dbReference type="PANTHER" id="PTHR30448:SF0">
    <property type="entry name" value="RNASE ADAPTER PROTEIN RAPZ"/>
    <property type="match status" value="1"/>
</dbReference>
<dbReference type="Pfam" id="PF22740">
    <property type="entry name" value="PapZ_C"/>
    <property type="match status" value="1"/>
</dbReference>
<dbReference type="Pfam" id="PF03668">
    <property type="entry name" value="RapZ-like_N"/>
    <property type="match status" value="1"/>
</dbReference>
<dbReference type="PIRSF" id="PIRSF005052">
    <property type="entry name" value="P-loopkin"/>
    <property type="match status" value="1"/>
</dbReference>
<dbReference type="SUPFAM" id="SSF52540">
    <property type="entry name" value="P-loop containing nucleoside triphosphate hydrolases"/>
    <property type="match status" value="1"/>
</dbReference>
<sequence length="296" mass="33500">MSEKKIDLVIVTGMSGAGKTVAIQSFEDLGYFTIDNMPPALVPKFLELVESSGENDKVALVVDMRSRLFFKEVSSILDKIDLNETINFRILFLDATDSELVSRYKETRRSHPLATTGRVLDGIALERELLAPLKNLSQNVVDTTDLTPRQLRKTISDQFSVEKSQTSFRLEVVSFGFKYGLPLDADLVFDVRFLPNPYYKPELRDKTGLDKDVSDYVMQHQESEEFYQHLLALLAPILPGYQKEGKSVLTIAIGCTGGQHRSVAFAHRLAQDLGQNWTVNESHRDKNRRKETVNRS</sequence>
<proteinExistence type="inferred from homology"/>
<name>Y1306_STRMU</name>
<feature type="chain" id="PRO_0000107769" description="Nucleotide-binding protein SMU_1306c">
    <location>
        <begin position="1"/>
        <end position="296"/>
    </location>
</feature>
<feature type="binding site" evidence="1">
    <location>
        <begin position="13"/>
        <end position="20"/>
    </location>
    <ligand>
        <name>ATP</name>
        <dbReference type="ChEBI" id="CHEBI:30616"/>
    </ligand>
</feature>
<feature type="binding site" evidence="1">
    <location>
        <begin position="63"/>
        <end position="66"/>
    </location>
    <ligand>
        <name>GTP</name>
        <dbReference type="ChEBI" id="CHEBI:37565"/>
    </ligand>
</feature>
<accession>Q8DTM7</accession>
<keyword id="KW-0067">ATP-binding</keyword>
<keyword id="KW-0342">GTP-binding</keyword>
<keyword id="KW-0547">Nucleotide-binding</keyword>
<keyword id="KW-1185">Reference proteome</keyword>
<protein>
    <recommendedName>
        <fullName evidence="1">Nucleotide-binding protein SMU_1306c</fullName>
    </recommendedName>
</protein>
<comment type="function">
    <text evidence="1">Displays ATPase and GTPase activities.</text>
</comment>
<comment type="similarity">
    <text evidence="1">Belongs to the RapZ-like family.</text>
</comment>
<organism>
    <name type="scientific">Streptococcus mutans serotype c (strain ATCC 700610 / UA159)</name>
    <dbReference type="NCBI Taxonomy" id="210007"/>
    <lineage>
        <taxon>Bacteria</taxon>
        <taxon>Bacillati</taxon>
        <taxon>Bacillota</taxon>
        <taxon>Bacilli</taxon>
        <taxon>Lactobacillales</taxon>
        <taxon>Streptococcaceae</taxon>
        <taxon>Streptococcus</taxon>
    </lineage>
</organism>
<reference key="1">
    <citation type="journal article" date="2002" name="Proc. Natl. Acad. Sci. U.S.A.">
        <title>Genome sequence of Streptococcus mutans UA159, a cariogenic dental pathogen.</title>
        <authorList>
            <person name="Ajdic D.J."/>
            <person name="McShan W.M."/>
            <person name="McLaughlin R.E."/>
            <person name="Savic G."/>
            <person name="Chang J."/>
            <person name="Carson M.B."/>
            <person name="Primeaux C."/>
            <person name="Tian R."/>
            <person name="Kenton S."/>
            <person name="Jia H.G."/>
            <person name="Lin S.P."/>
            <person name="Qian Y."/>
            <person name="Li S."/>
            <person name="Zhu H."/>
            <person name="Najar F.Z."/>
            <person name="Lai H."/>
            <person name="White J."/>
            <person name="Roe B.A."/>
            <person name="Ferretti J.J."/>
        </authorList>
    </citation>
    <scope>NUCLEOTIDE SEQUENCE [LARGE SCALE GENOMIC DNA]</scope>
    <source>
        <strain>ATCC 700610 / UA159</strain>
    </source>
</reference>
<gene>
    <name type="ordered locus">SMU_1306c</name>
</gene>
<evidence type="ECO:0000255" key="1">
    <source>
        <dbReference type="HAMAP-Rule" id="MF_00636"/>
    </source>
</evidence>